<dbReference type="EC" id="6.2.1.64" evidence="2"/>
<dbReference type="EMBL" id="AK014433">
    <property type="protein sequence ID" value="BAB29346.1"/>
    <property type="molecule type" value="mRNA"/>
</dbReference>
<dbReference type="EMBL" id="AK032514">
    <property type="protein sequence ID" value="BAC27905.1"/>
    <property type="molecule type" value="mRNA"/>
</dbReference>
<dbReference type="EMBL" id="AK048148">
    <property type="protein sequence ID" value="BAC33258.1"/>
    <property type="molecule type" value="mRNA"/>
</dbReference>
<dbReference type="EMBL" id="AK159381">
    <property type="protein sequence ID" value="BAE35036.1"/>
    <property type="molecule type" value="mRNA"/>
</dbReference>
<dbReference type="EMBL" id="AK168859">
    <property type="protein sequence ID" value="BAE40680.1"/>
    <property type="molecule type" value="mRNA"/>
</dbReference>
<dbReference type="EMBL" id="CH466523">
    <property type="protein sequence ID" value="EDK99352.1"/>
    <property type="molecule type" value="Genomic_DNA"/>
</dbReference>
<dbReference type="EMBL" id="BC002002">
    <property type="protein sequence ID" value="AAH02002.1"/>
    <property type="molecule type" value="mRNA"/>
</dbReference>
<dbReference type="EMBL" id="AF077330">
    <property type="protein sequence ID" value="AAC27323.1"/>
    <property type="molecule type" value="mRNA"/>
</dbReference>
<dbReference type="EMBL" id="AY029181">
    <property type="protein sequence ID" value="AAK33015.1"/>
    <property type="molecule type" value="mRNA"/>
</dbReference>
<dbReference type="CCDS" id="CCDS51860.1">
    <molecule id="Q8C878-1"/>
</dbReference>
<dbReference type="RefSeq" id="NP_001104576.1">
    <property type="nucleotide sequence ID" value="NM_001111106.2"/>
</dbReference>
<dbReference type="RefSeq" id="NP_001288786.1">
    <property type="nucleotide sequence ID" value="NM_001301857.1"/>
</dbReference>
<dbReference type="RefSeq" id="NP_001288787.1">
    <property type="nucleotide sequence ID" value="NM_001301858.1"/>
</dbReference>
<dbReference type="RefSeq" id="NP_001288788.1">
    <molecule id="Q8C878-2"/>
    <property type="nucleotide sequence ID" value="NM_001301859.1"/>
</dbReference>
<dbReference type="RefSeq" id="NP_035796.2">
    <molecule id="Q8C878-1"/>
    <property type="nucleotide sequence ID" value="NM_011666.3"/>
</dbReference>
<dbReference type="RefSeq" id="XP_006505976.1">
    <property type="nucleotide sequence ID" value="XM_006505913.3"/>
</dbReference>
<dbReference type="RefSeq" id="XP_011239592.1">
    <property type="nucleotide sequence ID" value="XM_011241290.2"/>
</dbReference>
<dbReference type="BMRB" id="Q8C878"/>
<dbReference type="SMR" id="Q8C878"/>
<dbReference type="BioGRID" id="204409">
    <property type="interactions" value="17"/>
</dbReference>
<dbReference type="FunCoup" id="Q8C878">
    <property type="interactions" value="4425"/>
</dbReference>
<dbReference type="STRING" id="10090.ENSMUSP00000086701"/>
<dbReference type="GlyGen" id="Q8C878">
    <property type="glycosylation" value="2 sites, 1 N-linked glycan (1 site), 1 O-linked glycan (1 site)"/>
</dbReference>
<dbReference type="iPTMnet" id="Q8C878"/>
<dbReference type="PhosphoSitePlus" id="Q8C878"/>
<dbReference type="SwissPalm" id="Q8C878"/>
<dbReference type="jPOST" id="Q8C878"/>
<dbReference type="PaxDb" id="10090-ENSMUSP00000086701"/>
<dbReference type="PeptideAtlas" id="Q8C878"/>
<dbReference type="ProteomicsDB" id="298176">
    <molecule id="Q8C878-1"/>
</dbReference>
<dbReference type="ProteomicsDB" id="298177">
    <molecule id="Q8C878-2"/>
</dbReference>
<dbReference type="Pumba" id="Q8C878"/>
<dbReference type="Antibodypedia" id="31863">
    <property type="antibodies" value="195 antibodies from 30 providers"/>
</dbReference>
<dbReference type="DNASU" id="22200"/>
<dbReference type="Ensembl" id="ENSMUST00000089287.7">
    <molecule id="Q8C878-1"/>
    <property type="protein sequence ID" value="ENSMUSP00000086701.6"/>
    <property type="gene ID" value="ENSMUSG00000030061.17"/>
</dbReference>
<dbReference type="GeneID" id="22200"/>
<dbReference type="KEGG" id="mmu:22200"/>
<dbReference type="UCSC" id="uc009dam.3">
    <molecule id="Q8C878-1"/>
    <property type="organism name" value="mouse"/>
</dbReference>
<dbReference type="AGR" id="MGI:1341217"/>
<dbReference type="CTD" id="9039"/>
<dbReference type="MGI" id="MGI:1341217">
    <property type="gene designation" value="Uba3"/>
</dbReference>
<dbReference type="VEuPathDB" id="HostDB:ENSMUSG00000030061"/>
<dbReference type="eggNOG" id="KOG2015">
    <property type="taxonomic scope" value="Eukaryota"/>
</dbReference>
<dbReference type="GeneTree" id="ENSGT00550000074831"/>
<dbReference type="InParanoid" id="Q8C878"/>
<dbReference type="OMA" id="PYLENYM"/>
<dbReference type="OrthoDB" id="5977743at2759"/>
<dbReference type="PhylomeDB" id="Q8C878"/>
<dbReference type="TreeFam" id="TF300499"/>
<dbReference type="Reactome" id="R-MMU-5607761">
    <property type="pathway name" value="Dectin-1 mediated noncanonical NF-kB signaling"/>
</dbReference>
<dbReference type="Reactome" id="R-MMU-5676590">
    <property type="pathway name" value="NIK--&gt;noncanonical NF-kB signaling"/>
</dbReference>
<dbReference type="Reactome" id="R-MMU-8951664">
    <property type="pathway name" value="Neddylation"/>
</dbReference>
<dbReference type="Reactome" id="R-MMU-983168">
    <property type="pathway name" value="Antigen processing: Ubiquitination &amp; Proteasome degradation"/>
</dbReference>
<dbReference type="UniPathway" id="UPA00885"/>
<dbReference type="BioGRID-ORCS" id="22200">
    <property type="hits" value="22 hits in 77 CRISPR screens"/>
</dbReference>
<dbReference type="PRO" id="PR:Q8C878"/>
<dbReference type="Proteomes" id="UP000000589">
    <property type="component" value="Chromosome 6"/>
</dbReference>
<dbReference type="RNAct" id="Q8C878">
    <property type="molecule type" value="protein"/>
</dbReference>
<dbReference type="Bgee" id="ENSMUSG00000030061">
    <property type="expression patterns" value="Expressed in otic placode and 261 other cell types or tissues"/>
</dbReference>
<dbReference type="ExpressionAtlas" id="Q8C878">
    <property type="expression patterns" value="baseline and differential"/>
</dbReference>
<dbReference type="GO" id="GO:0005634">
    <property type="term" value="C:nucleus"/>
    <property type="evidence" value="ECO:0007669"/>
    <property type="project" value="Ensembl"/>
</dbReference>
<dbReference type="GO" id="GO:0032991">
    <property type="term" value="C:protein-containing complex"/>
    <property type="evidence" value="ECO:0007669"/>
    <property type="project" value="Ensembl"/>
</dbReference>
<dbReference type="GO" id="GO:0005524">
    <property type="term" value="F:ATP binding"/>
    <property type="evidence" value="ECO:0007669"/>
    <property type="project" value="UniProtKB-KW"/>
</dbReference>
<dbReference type="GO" id="GO:0042802">
    <property type="term" value="F:identical protein binding"/>
    <property type="evidence" value="ECO:0007669"/>
    <property type="project" value="Ensembl"/>
</dbReference>
<dbReference type="GO" id="GO:0019781">
    <property type="term" value="F:NEDD8 activating enzyme activity"/>
    <property type="evidence" value="ECO:0000314"/>
    <property type="project" value="MGI"/>
</dbReference>
<dbReference type="GO" id="GO:0046982">
    <property type="term" value="F:protein heterodimerization activity"/>
    <property type="evidence" value="ECO:0007669"/>
    <property type="project" value="Ensembl"/>
</dbReference>
<dbReference type="GO" id="GO:0007113">
    <property type="term" value="P:endomitotic cell cycle"/>
    <property type="evidence" value="ECO:0000315"/>
    <property type="project" value="MGI"/>
</dbReference>
<dbReference type="GO" id="GO:0000278">
    <property type="term" value="P:mitotic cell cycle"/>
    <property type="evidence" value="ECO:0000315"/>
    <property type="project" value="MGI"/>
</dbReference>
<dbReference type="GO" id="GO:0045116">
    <property type="term" value="P:protein neddylation"/>
    <property type="evidence" value="ECO:0007669"/>
    <property type="project" value="UniProtKB-UniPathway"/>
</dbReference>
<dbReference type="GO" id="GO:0051726">
    <property type="term" value="P:regulation of cell cycle"/>
    <property type="evidence" value="ECO:0000315"/>
    <property type="project" value="MGI"/>
</dbReference>
<dbReference type="CDD" id="cd01488">
    <property type="entry name" value="Uba3_RUB"/>
    <property type="match status" value="1"/>
</dbReference>
<dbReference type="FunFam" id="1.10.10.520:FF:000001">
    <property type="entry name" value="NEDD8-activating enzyme E1 catalytic subunit"/>
    <property type="match status" value="1"/>
</dbReference>
<dbReference type="FunFam" id="3.40.50.720:FF:000106">
    <property type="entry name" value="NEDD8-activating enzyme E1 catalytic subunit, putative"/>
    <property type="match status" value="1"/>
</dbReference>
<dbReference type="FunFam" id="3.10.290.20:FF:000001">
    <property type="entry name" value="NEDD8-activating enzyme E1 catalytic subunit, variant"/>
    <property type="match status" value="1"/>
</dbReference>
<dbReference type="Gene3D" id="3.40.50.720">
    <property type="entry name" value="NAD(P)-binding Rossmann-like Domain"/>
    <property type="match status" value="1"/>
</dbReference>
<dbReference type="Gene3D" id="1.10.10.520">
    <property type="entry name" value="Ubiquitin activating enzymes (Uba3). Chain: B, domain 2"/>
    <property type="match status" value="1"/>
</dbReference>
<dbReference type="Gene3D" id="3.10.290.20">
    <property type="entry name" value="Ubiquitin-like 2 activating enzyme e1b. Chain: B, domain 3"/>
    <property type="match status" value="1"/>
</dbReference>
<dbReference type="InterPro" id="IPR014929">
    <property type="entry name" value="E2-binding"/>
</dbReference>
<dbReference type="InterPro" id="IPR045886">
    <property type="entry name" value="ThiF/MoeB/HesA"/>
</dbReference>
<dbReference type="InterPro" id="IPR000594">
    <property type="entry name" value="ThiF_NAD_FAD-bd"/>
</dbReference>
<dbReference type="InterPro" id="IPR023318">
    <property type="entry name" value="Ub_act_enz_dom_a_sf"/>
</dbReference>
<dbReference type="InterPro" id="IPR030468">
    <property type="entry name" value="Uba3_N"/>
</dbReference>
<dbReference type="InterPro" id="IPR035985">
    <property type="entry name" value="Ubiquitin-activating_enz"/>
</dbReference>
<dbReference type="InterPro" id="IPR033127">
    <property type="entry name" value="UBQ-activ_enz_E1_Cys_AS"/>
</dbReference>
<dbReference type="PANTHER" id="PTHR10953:SF6">
    <property type="entry name" value="NEDD8-ACTIVATING ENZYME E1 CATALYTIC SUBUNIT"/>
    <property type="match status" value="1"/>
</dbReference>
<dbReference type="PANTHER" id="PTHR10953">
    <property type="entry name" value="UBIQUITIN-ACTIVATING ENZYME E1"/>
    <property type="match status" value="1"/>
</dbReference>
<dbReference type="Pfam" id="PF08825">
    <property type="entry name" value="E2_bind"/>
    <property type="match status" value="1"/>
</dbReference>
<dbReference type="Pfam" id="PF00899">
    <property type="entry name" value="ThiF"/>
    <property type="match status" value="1"/>
</dbReference>
<dbReference type="SMART" id="SM01181">
    <property type="entry name" value="E2_bind"/>
    <property type="match status" value="1"/>
</dbReference>
<dbReference type="SUPFAM" id="SSF69572">
    <property type="entry name" value="Activating enzymes of the ubiquitin-like proteins"/>
    <property type="match status" value="1"/>
</dbReference>
<dbReference type="PROSITE" id="PS00865">
    <property type="entry name" value="UBIQUITIN_ACTIVAT_2"/>
    <property type="match status" value="1"/>
</dbReference>
<accession>Q8C878</accession>
<accession>O88598</accession>
<accession>Q3TG68</accession>
<accession>Q9D6B7</accession>
<reference key="1">
    <citation type="journal article" date="2005" name="Science">
        <title>The transcriptional landscape of the mammalian genome.</title>
        <authorList>
            <person name="Carninci P."/>
            <person name="Kasukawa T."/>
            <person name="Katayama S."/>
            <person name="Gough J."/>
            <person name="Frith M.C."/>
            <person name="Maeda N."/>
            <person name="Oyama R."/>
            <person name="Ravasi T."/>
            <person name="Lenhard B."/>
            <person name="Wells C."/>
            <person name="Kodzius R."/>
            <person name="Shimokawa K."/>
            <person name="Bajic V.B."/>
            <person name="Brenner S.E."/>
            <person name="Batalov S."/>
            <person name="Forrest A.R."/>
            <person name="Zavolan M."/>
            <person name="Davis M.J."/>
            <person name="Wilming L.G."/>
            <person name="Aidinis V."/>
            <person name="Allen J.E."/>
            <person name="Ambesi-Impiombato A."/>
            <person name="Apweiler R."/>
            <person name="Aturaliya R.N."/>
            <person name="Bailey T.L."/>
            <person name="Bansal M."/>
            <person name="Baxter L."/>
            <person name="Beisel K.W."/>
            <person name="Bersano T."/>
            <person name="Bono H."/>
            <person name="Chalk A.M."/>
            <person name="Chiu K.P."/>
            <person name="Choudhary V."/>
            <person name="Christoffels A."/>
            <person name="Clutterbuck D.R."/>
            <person name="Crowe M.L."/>
            <person name="Dalla E."/>
            <person name="Dalrymple B.P."/>
            <person name="de Bono B."/>
            <person name="Della Gatta G."/>
            <person name="di Bernardo D."/>
            <person name="Down T."/>
            <person name="Engstrom P."/>
            <person name="Fagiolini M."/>
            <person name="Faulkner G."/>
            <person name="Fletcher C.F."/>
            <person name="Fukushima T."/>
            <person name="Furuno M."/>
            <person name="Futaki S."/>
            <person name="Gariboldi M."/>
            <person name="Georgii-Hemming P."/>
            <person name="Gingeras T.R."/>
            <person name="Gojobori T."/>
            <person name="Green R.E."/>
            <person name="Gustincich S."/>
            <person name="Harbers M."/>
            <person name="Hayashi Y."/>
            <person name="Hensch T.K."/>
            <person name="Hirokawa N."/>
            <person name="Hill D."/>
            <person name="Huminiecki L."/>
            <person name="Iacono M."/>
            <person name="Ikeo K."/>
            <person name="Iwama A."/>
            <person name="Ishikawa T."/>
            <person name="Jakt M."/>
            <person name="Kanapin A."/>
            <person name="Katoh M."/>
            <person name="Kawasawa Y."/>
            <person name="Kelso J."/>
            <person name="Kitamura H."/>
            <person name="Kitano H."/>
            <person name="Kollias G."/>
            <person name="Krishnan S.P."/>
            <person name="Kruger A."/>
            <person name="Kummerfeld S.K."/>
            <person name="Kurochkin I.V."/>
            <person name="Lareau L.F."/>
            <person name="Lazarevic D."/>
            <person name="Lipovich L."/>
            <person name="Liu J."/>
            <person name="Liuni S."/>
            <person name="McWilliam S."/>
            <person name="Madan Babu M."/>
            <person name="Madera M."/>
            <person name="Marchionni L."/>
            <person name="Matsuda H."/>
            <person name="Matsuzawa S."/>
            <person name="Miki H."/>
            <person name="Mignone F."/>
            <person name="Miyake S."/>
            <person name="Morris K."/>
            <person name="Mottagui-Tabar S."/>
            <person name="Mulder N."/>
            <person name="Nakano N."/>
            <person name="Nakauchi H."/>
            <person name="Ng P."/>
            <person name="Nilsson R."/>
            <person name="Nishiguchi S."/>
            <person name="Nishikawa S."/>
            <person name="Nori F."/>
            <person name="Ohara O."/>
            <person name="Okazaki Y."/>
            <person name="Orlando V."/>
            <person name="Pang K.C."/>
            <person name="Pavan W.J."/>
            <person name="Pavesi G."/>
            <person name="Pesole G."/>
            <person name="Petrovsky N."/>
            <person name="Piazza S."/>
            <person name="Reed J."/>
            <person name="Reid J.F."/>
            <person name="Ring B.Z."/>
            <person name="Ringwald M."/>
            <person name="Rost B."/>
            <person name="Ruan Y."/>
            <person name="Salzberg S.L."/>
            <person name="Sandelin A."/>
            <person name="Schneider C."/>
            <person name="Schoenbach C."/>
            <person name="Sekiguchi K."/>
            <person name="Semple C.A."/>
            <person name="Seno S."/>
            <person name="Sessa L."/>
            <person name="Sheng Y."/>
            <person name="Shibata Y."/>
            <person name="Shimada H."/>
            <person name="Shimada K."/>
            <person name="Silva D."/>
            <person name="Sinclair B."/>
            <person name="Sperling S."/>
            <person name="Stupka E."/>
            <person name="Sugiura K."/>
            <person name="Sultana R."/>
            <person name="Takenaka Y."/>
            <person name="Taki K."/>
            <person name="Tammoja K."/>
            <person name="Tan S.L."/>
            <person name="Tang S."/>
            <person name="Taylor M.S."/>
            <person name="Tegner J."/>
            <person name="Teichmann S.A."/>
            <person name="Ueda H.R."/>
            <person name="van Nimwegen E."/>
            <person name="Verardo R."/>
            <person name="Wei C.L."/>
            <person name="Yagi K."/>
            <person name="Yamanishi H."/>
            <person name="Zabarovsky E."/>
            <person name="Zhu S."/>
            <person name="Zimmer A."/>
            <person name="Hide W."/>
            <person name="Bult C."/>
            <person name="Grimmond S.M."/>
            <person name="Teasdale R.D."/>
            <person name="Liu E.T."/>
            <person name="Brusic V."/>
            <person name="Quackenbush J."/>
            <person name="Wahlestedt C."/>
            <person name="Mattick J.S."/>
            <person name="Hume D.A."/>
            <person name="Kai C."/>
            <person name="Sasaki D."/>
            <person name="Tomaru Y."/>
            <person name="Fukuda S."/>
            <person name="Kanamori-Katayama M."/>
            <person name="Suzuki M."/>
            <person name="Aoki J."/>
            <person name="Arakawa T."/>
            <person name="Iida J."/>
            <person name="Imamura K."/>
            <person name="Itoh M."/>
            <person name="Kato T."/>
            <person name="Kawaji H."/>
            <person name="Kawagashira N."/>
            <person name="Kawashima T."/>
            <person name="Kojima M."/>
            <person name="Kondo S."/>
            <person name="Konno H."/>
            <person name="Nakano K."/>
            <person name="Ninomiya N."/>
            <person name="Nishio T."/>
            <person name="Okada M."/>
            <person name="Plessy C."/>
            <person name="Shibata K."/>
            <person name="Shiraki T."/>
            <person name="Suzuki S."/>
            <person name="Tagami M."/>
            <person name="Waki K."/>
            <person name="Watahiki A."/>
            <person name="Okamura-Oho Y."/>
            <person name="Suzuki H."/>
            <person name="Kawai J."/>
            <person name="Hayashizaki Y."/>
        </authorList>
    </citation>
    <scope>NUCLEOTIDE SEQUENCE [LARGE SCALE MRNA] (ISOFORMS 1 AND 2)</scope>
    <source>
        <strain>C57BL/6J</strain>
        <tissue>Embryonic head</tissue>
        <tissue>Kidney</tissue>
        <tissue>Placenta</tissue>
    </source>
</reference>
<reference key="2">
    <citation type="submission" date="2005-07" db="EMBL/GenBank/DDBJ databases">
        <authorList>
            <person name="Mural R.J."/>
            <person name="Adams M.D."/>
            <person name="Myers E.W."/>
            <person name="Smith H.O."/>
            <person name="Venter J.C."/>
        </authorList>
    </citation>
    <scope>NUCLEOTIDE SEQUENCE [LARGE SCALE GENOMIC DNA]</scope>
</reference>
<reference key="3">
    <citation type="journal article" date="2004" name="Genome Res.">
        <title>The status, quality, and expansion of the NIH full-length cDNA project: the Mammalian Gene Collection (MGC).</title>
        <authorList>
            <consortium name="The MGC Project Team"/>
        </authorList>
    </citation>
    <scope>NUCLEOTIDE SEQUENCE [LARGE SCALE MRNA] OF 3-462 (ISOFORM 1)</scope>
</reference>
<reference key="4">
    <citation type="journal article" date="1999" name="J. Biol. Chem.">
        <title>Identification of the activating and conjugating enzymes of the NEDD8 conjugation pathway.</title>
        <authorList>
            <person name="Gong L."/>
            <person name="Yeh E.T.H."/>
        </authorList>
    </citation>
    <scope>NUCLEOTIDE SEQUENCE [MRNA] OF 9-462 (ISOFORM 1)</scope>
    <source>
        <tissue>Liver</tissue>
    </source>
</reference>
<reference key="5">
    <citation type="journal article" date="2001" name="J. Cell Biol.">
        <title>The NEDD8 system is essential for cell cycle progression and morphogenetic pathway in mice.</title>
        <authorList>
            <person name="Tateishi K."/>
            <person name="Omata M."/>
            <person name="Tanaka K."/>
            <person name="Chiba T."/>
        </authorList>
    </citation>
    <scope>NUCLEOTIDE SEQUENCE [MRNA] OF 9-462 (ISOFORM 1)</scope>
    <scope>FUNCTION</scope>
    <source>
        <strain>C57BL/6J</strain>
    </source>
</reference>
<reference key="6">
    <citation type="journal article" date="2010" name="Cell">
        <title>A tissue-specific atlas of mouse protein phosphorylation and expression.</title>
        <authorList>
            <person name="Huttlin E.L."/>
            <person name="Jedrychowski M.P."/>
            <person name="Elias J.E."/>
            <person name="Goswami T."/>
            <person name="Rad R."/>
            <person name="Beausoleil S.A."/>
            <person name="Villen J."/>
            <person name="Haas W."/>
            <person name="Sowa M.E."/>
            <person name="Gygi S.P."/>
        </authorList>
    </citation>
    <scope>IDENTIFICATION BY MASS SPECTROMETRY [LARGE SCALE ANALYSIS]</scope>
    <source>
        <tissue>Brain</tissue>
        <tissue>Brown adipose tissue</tissue>
        <tissue>Heart</tissue>
        <tissue>Kidney</tissue>
        <tissue>Lung</tissue>
        <tissue>Pancreas</tissue>
        <tissue>Spleen</tissue>
        <tissue>Testis</tissue>
    </source>
</reference>
<reference key="7">
    <citation type="journal article" date="2010" name="J. Exp. Med.">
        <title>Tbata modulates thymic stromal cell proliferation and thymus function.</title>
        <authorList>
            <person name="Flomerfelt F.A."/>
            <person name="El Kassar N."/>
            <person name="Gurunathan C."/>
            <person name="Chua K.S."/>
            <person name="League S.C."/>
            <person name="Schmitz S."/>
            <person name="Gershon T.R."/>
            <person name="Kapoor V."/>
            <person name="Yan X.Y."/>
            <person name="Schwartz R.H."/>
            <person name="Gress R.E."/>
        </authorList>
    </citation>
    <scope>INTERACTION WITH TBATA</scope>
</reference>
<sequence length="462" mass="51737">MADGEEPEKKRRRIEELLAEKMAVDGGCGDTGDWEGRWNHVKKFLERSGPFTHPDFEPSTESLQFLLDTCKVLVIGAGGLGCELLKNLALSGFRQIHVIDMDTIDVSNLNRQFLFRPKDVGRPKAEVAAEFLNDRVPNCNVVPHFNKIQDFNDTFYRQFHIIVCGLDSIIARRWINGMLISLLNYEDGVLDPSSIVPLIDGGTEGFKGNARVILPGMTACIECTLELYPPQVNFPMCTIASMPRLPEHCIEYVRMLQWPKEQPFGDGVPLDGDDPEHIQWIFQKSIERASQYNIRGVTYRLTQGVVKRIIPAVASTNAVIAAVCATEVFKIATSAYIPLNNYLVFNDVDGLYTYTFEAERKENCPACSQLPQNIQFSPSAKLQEVLDYLTNSASLQMKSPAITATLEGKNRTLYLQSVTSIEERTRPNLSKTLKELGLVDGQELAVADVTTPQTVLFKLHFT</sequence>
<keyword id="KW-0007">Acetylation</keyword>
<keyword id="KW-0025">Alternative splicing</keyword>
<keyword id="KW-0067">ATP-binding</keyword>
<keyword id="KW-0131">Cell cycle</keyword>
<keyword id="KW-0436">Ligase</keyword>
<keyword id="KW-0547">Nucleotide-binding</keyword>
<keyword id="KW-1185">Reference proteome</keyword>
<keyword id="KW-0833">Ubl conjugation pathway</keyword>
<proteinExistence type="evidence at protein level"/>
<protein>
    <recommendedName>
        <fullName>NEDD8-activating enzyme E1 catalytic subunit</fullName>
        <ecNumber evidence="2">6.2.1.64</ecNumber>
    </recommendedName>
    <alternativeName>
        <fullName>NEDD8-activating enzyme E1C</fullName>
    </alternativeName>
    <alternativeName>
        <fullName>Ubiquitin-activating enzyme E1C</fullName>
    </alternativeName>
    <alternativeName>
        <fullName>Ubiquitin-like modifier-activating enzyme 3</fullName>
        <shortName>Ubiquitin-activating enzyme 3</shortName>
    </alternativeName>
</protein>
<comment type="function">
    <text evidence="4">Catalytic subunit of the dimeric UBA3-NAE1 E1 enzyme. E1 activates NEDD8 by first adenylating its C-terminal glycine residue with ATP, thereafter linking this residue to the side chain of the catalytic cysteine, yielding a NEDD8-UBA3 thioester and free AMP. E1 finally transfers NEDD8 to the catalytic cysteine of UBE2M. Down-regulates steroid receptor activity. Necessary for cell cycle progression.</text>
</comment>
<comment type="catalytic activity">
    <molecule>NEDD8-activating enzyme E1 catalytic subunit</molecule>
    <reaction evidence="2">
        <text>ATP + [NEDD8 protein] + [E1 NEDD8-activating enzyme]-L-cysteine = AMP + diphosphate + [E1 NEDD8-activating enzyme]-S-[NEDD8 protein]-yl-L-cysteine.</text>
        <dbReference type="EC" id="6.2.1.64"/>
    </reaction>
</comment>
<comment type="activity regulation">
    <text evidence="1">Binding of TP53BP2 to the regulatory subunit NAE1 decreases activity.</text>
</comment>
<comment type="pathway">
    <text>Protein modification; protein neddylation.</text>
</comment>
<comment type="subunit">
    <text evidence="1 5">Heterodimer of UBA3 and NAE1. Interacts with NEDD8, UBE2F and UBE2M. Binds ESR1 and ESR2 with bound steroid ligand (By similarity). Interacts with TBATA.</text>
</comment>
<comment type="alternative products">
    <event type="alternative splicing"/>
    <isoform>
        <id>Q8C878-1</id>
        <name>1</name>
        <sequence type="displayed"/>
    </isoform>
    <isoform>
        <id>Q8C878-2</id>
        <name>2</name>
        <sequence type="described" ref="VSP_010787"/>
    </isoform>
</comment>
<comment type="disease">
    <text evidence="4">Defects in Uba3 are a cause of embryonic lethality. Mouse embryos deficient in Uba3 die at the preimplantation stage (PubMed:11696557).</text>
</comment>
<comment type="miscellaneous">
    <text evidence="1">Arg-211 acts as a selectivity gate, preventing misactivation of ubiquitin by this NEDD8-specific E1 complex.</text>
</comment>
<comment type="similarity">
    <text evidence="7">Belongs to the ubiquitin-activating E1 family. UBA3 subfamily.</text>
</comment>
<evidence type="ECO:0000250" key="1"/>
<evidence type="ECO:0000250" key="2">
    <source>
        <dbReference type="UniProtKB" id="Q8TBC4"/>
    </source>
</evidence>
<evidence type="ECO:0000255" key="3">
    <source>
        <dbReference type="PROSITE-ProRule" id="PRU10132"/>
    </source>
</evidence>
<evidence type="ECO:0000269" key="4">
    <source>
    </source>
</evidence>
<evidence type="ECO:0000269" key="5">
    <source>
    </source>
</evidence>
<evidence type="ECO:0000303" key="6">
    <source>
    </source>
</evidence>
<evidence type="ECO:0000305" key="7"/>
<organism>
    <name type="scientific">Mus musculus</name>
    <name type="common">Mouse</name>
    <dbReference type="NCBI Taxonomy" id="10090"/>
    <lineage>
        <taxon>Eukaryota</taxon>
        <taxon>Metazoa</taxon>
        <taxon>Chordata</taxon>
        <taxon>Craniata</taxon>
        <taxon>Vertebrata</taxon>
        <taxon>Euteleostomi</taxon>
        <taxon>Mammalia</taxon>
        <taxon>Eutheria</taxon>
        <taxon>Euarchontoglires</taxon>
        <taxon>Glires</taxon>
        <taxon>Rodentia</taxon>
        <taxon>Myomorpha</taxon>
        <taxon>Muroidea</taxon>
        <taxon>Muridae</taxon>
        <taxon>Murinae</taxon>
        <taxon>Mus</taxon>
        <taxon>Mus</taxon>
    </lineage>
</organism>
<name>UBA3_MOUSE</name>
<gene>
    <name type="primary">Uba3</name>
    <name type="synonym">Ube1c</name>
</gene>
<feature type="initiator methionine" description="Removed" evidence="2">
    <location>
        <position position="1"/>
    </location>
</feature>
<feature type="chain" id="PRO_0000194942" description="NEDD8-activating enzyme E1 catalytic subunit">
    <location>
        <begin position="2"/>
        <end position="462"/>
    </location>
</feature>
<feature type="region of interest" description="Interaction with UBE2M N-terminus" evidence="1">
    <location>
        <begin position="53"/>
        <end position="70"/>
    </location>
</feature>
<feature type="region of interest" description="Interaction with UBE2M N-terminus" evidence="1">
    <location>
        <begin position="157"/>
        <end position="161"/>
    </location>
</feature>
<feature type="region of interest" description="Interaction with UBE2M N-terminus" evidence="1">
    <location>
        <begin position="192"/>
        <end position="217"/>
    </location>
</feature>
<feature type="region of interest" description="Interaction with NEDD8" evidence="1">
    <location>
        <begin position="227"/>
        <end position="229"/>
    </location>
</feature>
<feature type="region of interest" description="Interaction with NAE1" evidence="1">
    <location>
        <begin position="242"/>
        <end position="248"/>
    </location>
</feature>
<feature type="region of interest" description="Interaction with NAE1" evidence="1">
    <location>
        <begin position="292"/>
        <end position="295"/>
    </location>
</feature>
<feature type="region of interest" description="Interaction with UBE2M N-terminus" evidence="1">
    <location>
        <begin position="331"/>
        <end position="338"/>
    </location>
</feature>
<feature type="region of interest" description="Interaction with NEDD8" evidence="1">
    <location>
        <begin position="352"/>
        <end position="357"/>
    </location>
</feature>
<feature type="region of interest" description="Interaction with UBE2M core domain" evidence="1">
    <location>
        <begin position="368"/>
        <end position="462"/>
    </location>
</feature>
<feature type="active site" description="Glycyl thioester intermediate" evidence="3">
    <location>
        <position position="237"/>
    </location>
</feature>
<feature type="binding site" evidence="1">
    <location>
        <begin position="100"/>
        <end position="124"/>
    </location>
    <ligand>
        <name>ATP</name>
        <dbReference type="ChEBI" id="CHEBI:30616"/>
    </ligand>
</feature>
<feature type="binding site" evidence="1">
    <location>
        <begin position="148"/>
        <end position="171"/>
    </location>
    <ligand>
        <name>ATP</name>
        <dbReference type="ChEBI" id="CHEBI:30616"/>
    </ligand>
</feature>
<feature type="site" description="Determines specificity for NEDD8" evidence="1">
    <location>
        <position position="211"/>
    </location>
</feature>
<feature type="modified residue" description="N-acetylalanine" evidence="2">
    <location>
        <position position="2"/>
    </location>
</feature>
<feature type="splice variant" id="VSP_010787" description="In isoform 2." evidence="6">
    <location>
        <begin position="396"/>
        <end position="462"/>
    </location>
</feature>
<feature type="sequence conflict" description="In Ref. 1; BAB29346." evidence="7" ref="1">
    <original>K</original>
    <variation>E</variation>
    <location>
        <position position="147"/>
    </location>
</feature>
<feature type="sequence conflict" description="In Ref. 1; BAB29346." evidence="7" ref="1">
    <original>S</original>
    <variation>G</variation>
    <location>
        <position position="334"/>
    </location>
</feature>
<feature type="sequence conflict" description="In Ref. 1; BAC33258." evidence="7" ref="1">
    <original>M</original>
    <variation>I</variation>
    <location>
        <position position="397"/>
    </location>
</feature>